<organism>
    <name type="scientific">Chlamydia trachomatis serovar D (strain ATCC VR-885 / DSM 19411 / UW-3/Cx)</name>
    <dbReference type="NCBI Taxonomy" id="272561"/>
    <lineage>
        <taxon>Bacteria</taxon>
        <taxon>Pseudomonadati</taxon>
        <taxon>Chlamydiota</taxon>
        <taxon>Chlamydiia</taxon>
        <taxon>Chlamydiales</taxon>
        <taxon>Chlamydiaceae</taxon>
        <taxon>Chlamydia/Chlamydophila group</taxon>
        <taxon>Chlamydia</taxon>
    </lineage>
</organism>
<feature type="chain" id="PRO_0000126172" description="Large ribosomal subunit protein bL36">
    <location>
        <begin position="1"/>
        <end position="45"/>
    </location>
</feature>
<feature type="region of interest" description="Disordered" evidence="2">
    <location>
        <begin position="1"/>
        <end position="45"/>
    </location>
</feature>
<comment type="similarity">
    <text evidence="1">Belongs to the bacterial ribosomal protein bL36 family.</text>
</comment>
<dbReference type="EMBL" id="AE001273">
    <property type="protein sequence ID" value="AAC68381.1"/>
    <property type="molecule type" value="Genomic_DNA"/>
</dbReference>
<dbReference type="PIR" id="F71470">
    <property type="entry name" value="F71470"/>
</dbReference>
<dbReference type="RefSeq" id="NP_220305.1">
    <property type="nucleotide sequence ID" value="NC_000117.1"/>
</dbReference>
<dbReference type="RefSeq" id="WP_009872166.1">
    <property type="nucleotide sequence ID" value="NC_000117.1"/>
</dbReference>
<dbReference type="SMR" id="P66288"/>
<dbReference type="STRING" id="272561.CT_786"/>
<dbReference type="EnsemblBacteria" id="AAC68381">
    <property type="protein sequence ID" value="AAC68381"/>
    <property type="gene ID" value="CT_786"/>
</dbReference>
<dbReference type="GeneID" id="884589"/>
<dbReference type="GeneID" id="93065661"/>
<dbReference type="KEGG" id="ctr:CT_786"/>
<dbReference type="PATRIC" id="fig|272561.5.peg.864"/>
<dbReference type="HOGENOM" id="CLU_135723_3_3_0"/>
<dbReference type="InParanoid" id="P66288"/>
<dbReference type="OrthoDB" id="9801558at2"/>
<dbReference type="PRO" id="PR:P66288"/>
<dbReference type="Proteomes" id="UP000000431">
    <property type="component" value="Chromosome"/>
</dbReference>
<dbReference type="GO" id="GO:1990904">
    <property type="term" value="C:ribonucleoprotein complex"/>
    <property type="evidence" value="ECO:0007669"/>
    <property type="project" value="UniProtKB-KW"/>
</dbReference>
<dbReference type="GO" id="GO:0005840">
    <property type="term" value="C:ribosome"/>
    <property type="evidence" value="ECO:0007669"/>
    <property type="project" value="UniProtKB-KW"/>
</dbReference>
<dbReference type="GO" id="GO:0003735">
    <property type="term" value="F:structural constituent of ribosome"/>
    <property type="evidence" value="ECO:0007669"/>
    <property type="project" value="InterPro"/>
</dbReference>
<dbReference type="GO" id="GO:0006412">
    <property type="term" value="P:translation"/>
    <property type="evidence" value="ECO:0007669"/>
    <property type="project" value="UniProtKB-UniRule"/>
</dbReference>
<dbReference type="HAMAP" id="MF_00251">
    <property type="entry name" value="Ribosomal_bL36"/>
    <property type="match status" value="1"/>
</dbReference>
<dbReference type="InterPro" id="IPR000473">
    <property type="entry name" value="Ribosomal_bL36"/>
</dbReference>
<dbReference type="InterPro" id="IPR035977">
    <property type="entry name" value="Ribosomal_bL36_sp"/>
</dbReference>
<dbReference type="NCBIfam" id="TIGR01022">
    <property type="entry name" value="rpmJ_bact"/>
    <property type="match status" value="1"/>
</dbReference>
<dbReference type="Pfam" id="PF00444">
    <property type="entry name" value="Ribosomal_L36"/>
    <property type="match status" value="1"/>
</dbReference>
<dbReference type="SUPFAM" id="SSF57840">
    <property type="entry name" value="Ribosomal protein L36"/>
    <property type="match status" value="1"/>
</dbReference>
<dbReference type="PROSITE" id="PS00828">
    <property type="entry name" value="RIBOSOMAL_L36"/>
    <property type="match status" value="1"/>
</dbReference>
<name>RL36_CHLTR</name>
<reference key="1">
    <citation type="journal article" date="1998" name="Science">
        <title>Genome sequence of an obligate intracellular pathogen of humans: Chlamydia trachomatis.</title>
        <authorList>
            <person name="Stephens R.S."/>
            <person name="Kalman S."/>
            <person name="Lammel C.J."/>
            <person name="Fan J."/>
            <person name="Marathe R."/>
            <person name="Aravind L."/>
            <person name="Mitchell W.P."/>
            <person name="Olinger L."/>
            <person name="Tatusov R.L."/>
            <person name="Zhao Q."/>
            <person name="Koonin E.V."/>
            <person name="Davis R.W."/>
        </authorList>
    </citation>
    <scope>NUCLEOTIDE SEQUENCE [LARGE SCALE GENOMIC DNA]</scope>
    <source>
        <strain>ATCC VR-885 / DSM 19411 / UW-3/Cx</strain>
    </source>
</reference>
<protein>
    <recommendedName>
        <fullName evidence="1">Large ribosomal subunit protein bL36</fullName>
    </recommendedName>
    <alternativeName>
        <fullName evidence="3">50S ribosomal protein L36</fullName>
    </alternativeName>
</protein>
<proteinExistence type="inferred from homology"/>
<sequence length="45" mass="5163">MRVSSSIKADPSKGDKLVRRKGRLYVINKKDPNRKQRQAGPARKK</sequence>
<gene>
    <name evidence="1" type="primary">rpmJ</name>
    <name type="synonym">rl36</name>
    <name type="ordered locus">CT_786</name>
</gene>
<accession>P66288</accession>
<accession>O84791</accession>
<accession>Q9PLD5</accession>
<evidence type="ECO:0000255" key="1">
    <source>
        <dbReference type="HAMAP-Rule" id="MF_00251"/>
    </source>
</evidence>
<evidence type="ECO:0000256" key="2">
    <source>
        <dbReference type="SAM" id="MobiDB-lite"/>
    </source>
</evidence>
<evidence type="ECO:0000305" key="3"/>
<keyword id="KW-1185">Reference proteome</keyword>
<keyword id="KW-0687">Ribonucleoprotein</keyword>
<keyword id="KW-0689">Ribosomal protein</keyword>